<protein>
    <recommendedName>
        <fullName evidence="1">UvrABC system protein C</fullName>
        <shortName evidence="1">Protein UvrC</shortName>
    </recommendedName>
    <alternativeName>
        <fullName evidence="1">Excinuclease ABC subunit C</fullName>
    </alternativeName>
</protein>
<accession>B4U3F9</accession>
<comment type="function">
    <text evidence="1">The UvrABC repair system catalyzes the recognition and processing of DNA lesions. UvrC both incises the 5' and 3' sides of the lesion. The N-terminal half is responsible for the 3' incision and the C-terminal half is responsible for the 5' incision.</text>
</comment>
<comment type="subunit">
    <text evidence="1">Interacts with UvrB in an incision complex.</text>
</comment>
<comment type="subcellular location">
    <subcellularLocation>
        <location evidence="1">Cytoplasm</location>
    </subcellularLocation>
</comment>
<comment type="similarity">
    <text evidence="1">Belongs to the UvrC family.</text>
</comment>
<name>UVRC_STREM</name>
<evidence type="ECO:0000255" key="1">
    <source>
        <dbReference type="HAMAP-Rule" id="MF_00203"/>
    </source>
</evidence>
<organism>
    <name type="scientific">Streptococcus equi subsp. zooepidemicus (strain MGCS10565)</name>
    <dbReference type="NCBI Taxonomy" id="552526"/>
    <lineage>
        <taxon>Bacteria</taxon>
        <taxon>Bacillati</taxon>
        <taxon>Bacillota</taxon>
        <taxon>Bacilli</taxon>
        <taxon>Lactobacillales</taxon>
        <taxon>Streptococcaceae</taxon>
        <taxon>Streptococcus</taxon>
    </lineage>
</organism>
<gene>
    <name evidence="1" type="primary">uvrC</name>
    <name type="ordered locus">Sez_1179</name>
</gene>
<sequence>MNELIKHKLELLPDSPGCYLHKDKAGTIIYVGKAKNLRNRVRSYFRGSHDTKTELLVSEIADFEFIVTGSNTEALLLEINLIQENMPKYNIKLKDDKSYPFIKITNEPFPRLLITRQIKKNDGLYFGPYPDAYTATEVKKLLDRIFPFKKCKNPVNKVCFYYHLGQCQAHTICHTDKAYWDSLVADVKQFLNGKDDKIIDDLRSKMLEASNKQEFERAAEYRDLISGIATMRTKQRVMSKDLQDRDIFGYFVDKGWMCVQVFFVRQGKLIQRDVNMFPYYNEAEEDFLTYVGQFYSDQRHLIPKEIFIPETIDETLVAAIVPARIVKPQRGEKKQLVALATKNARVSLQQKFDLLEKDLRKTSGAIEHLGQLLGIEKPVRIEAFDNSNIQGTSPVAAMVVFVDGKPSKKDYRKFKIKTVIGPDDYASMREVIYRRYSRVKHEGLQVPDLIIVDGGQGQVKAARDVIEHQLGLSIPVAGLQKNDKHQTHELLFGNPLAVVELPRNSEEFFLLHRIQDEVHRFAITFHRQVRSKNAFSSKLDHIAGLGPKRKQLLLKRFKSMTALEQASLEEIQQLGIPKTVAEALFDHLTSKSEV</sequence>
<keyword id="KW-0963">Cytoplasm</keyword>
<keyword id="KW-0227">DNA damage</keyword>
<keyword id="KW-0228">DNA excision</keyword>
<keyword id="KW-0234">DNA repair</keyword>
<keyword id="KW-0267">Excision nuclease</keyword>
<keyword id="KW-0742">SOS response</keyword>
<proteinExistence type="inferred from homology"/>
<dbReference type="EMBL" id="CP001129">
    <property type="protein sequence ID" value="ACG62526.1"/>
    <property type="molecule type" value="Genomic_DNA"/>
</dbReference>
<dbReference type="RefSeq" id="WP_012515791.1">
    <property type="nucleotide sequence ID" value="NC_011134.1"/>
</dbReference>
<dbReference type="SMR" id="B4U3F9"/>
<dbReference type="KEGG" id="sez:Sez_1179"/>
<dbReference type="HOGENOM" id="CLU_014841_3_2_9"/>
<dbReference type="Proteomes" id="UP000001873">
    <property type="component" value="Chromosome"/>
</dbReference>
<dbReference type="GO" id="GO:0005737">
    <property type="term" value="C:cytoplasm"/>
    <property type="evidence" value="ECO:0007669"/>
    <property type="project" value="UniProtKB-SubCell"/>
</dbReference>
<dbReference type="GO" id="GO:0009380">
    <property type="term" value="C:excinuclease repair complex"/>
    <property type="evidence" value="ECO:0007669"/>
    <property type="project" value="InterPro"/>
</dbReference>
<dbReference type="GO" id="GO:0003677">
    <property type="term" value="F:DNA binding"/>
    <property type="evidence" value="ECO:0007669"/>
    <property type="project" value="UniProtKB-UniRule"/>
</dbReference>
<dbReference type="GO" id="GO:0009381">
    <property type="term" value="F:excinuclease ABC activity"/>
    <property type="evidence" value="ECO:0007669"/>
    <property type="project" value="UniProtKB-UniRule"/>
</dbReference>
<dbReference type="GO" id="GO:0006289">
    <property type="term" value="P:nucleotide-excision repair"/>
    <property type="evidence" value="ECO:0007669"/>
    <property type="project" value="UniProtKB-UniRule"/>
</dbReference>
<dbReference type="GO" id="GO:0009432">
    <property type="term" value="P:SOS response"/>
    <property type="evidence" value="ECO:0007669"/>
    <property type="project" value="UniProtKB-UniRule"/>
</dbReference>
<dbReference type="CDD" id="cd10434">
    <property type="entry name" value="GIY-YIG_UvrC_Cho"/>
    <property type="match status" value="1"/>
</dbReference>
<dbReference type="FunFam" id="3.30.420.340:FF:000002">
    <property type="entry name" value="UvrABC system protein C"/>
    <property type="match status" value="1"/>
</dbReference>
<dbReference type="FunFam" id="3.40.1440.10:FF:000001">
    <property type="entry name" value="UvrABC system protein C"/>
    <property type="match status" value="1"/>
</dbReference>
<dbReference type="Gene3D" id="1.10.150.20">
    <property type="entry name" value="5' to 3' exonuclease, C-terminal subdomain"/>
    <property type="match status" value="1"/>
</dbReference>
<dbReference type="Gene3D" id="3.40.1440.10">
    <property type="entry name" value="GIY-YIG endonuclease"/>
    <property type="match status" value="1"/>
</dbReference>
<dbReference type="Gene3D" id="4.10.860.10">
    <property type="entry name" value="UVR domain"/>
    <property type="match status" value="1"/>
</dbReference>
<dbReference type="Gene3D" id="3.30.420.340">
    <property type="entry name" value="UvrC, RNAse H endonuclease domain"/>
    <property type="match status" value="1"/>
</dbReference>
<dbReference type="HAMAP" id="MF_00203">
    <property type="entry name" value="UvrC"/>
    <property type="match status" value="1"/>
</dbReference>
<dbReference type="InterPro" id="IPR000305">
    <property type="entry name" value="GIY-YIG_endonuc"/>
</dbReference>
<dbReference type="InterPro" id="IPR035901">
    <property type="entry name" value="GIY-YIG_endonuc_sf"/>
</dbReference>
<dbReference type="InterPro" id="IPR047296">
    <property type="entry name" value="GIY-YIG_UvrC_Cho"/>
</dbReference>
<dbReference type="InterPro" id="IPR010994">
    <property type="entry name" value="RuvA_2-like"/>
</dbReference>
<dbReference type="InterPro" id="IPR001943">
    <property type="entry name" value="UVR_dom"/>
</dbReference>
<dbReference type="InterPro" id="IPR036876">
    <property type="entry name" value="UVR_dom_sf"/>
</dbReference>
<dbReference type="InterPro" id="IPR050066">
    <property type="entry name" value="UvrABC_protein_C"/>
</dbReference>
<dbReference type="InterPro" id="IPR004791">
    <property type="entry name" value="UvrC"/>
</dbReference>
<dbReference type="InterPro" id="IPR001162">
    <property type="entry name" value="UvrC_RNase_H_dom"/>
</dbReference>
<dbReference type="InterPro" id="IPR038476">
    <property type="entry name" value="UvrC_RNase_H_dom_sf"/>
</dbReference>
<dbReference type="NCBIfam" id="TIGR00194">
    <property type="entry name" value="uvrC"/>
    <property type="match status" value="1"/>
</dbReference>
<dbReference type="PANTHER" id="PTHR30562:SF1">
    <property type="entry name" value="UVRABC SYSTEM PROTEIN C"/>
    <property type="match status" value="1"/>
</dbReference>
<dbReference type="PANTHER" id="PTHR30562">
    <property type="entry name" value="UVRC/OXIDOREDUCTASE"/>
    <property type="match status" value="1"/>
</dbReference>
<dbReference type="Pfam" id="PF01541">
    <property type="entry name" value="GIY-YIG"/>
    <property type="match status" value="1"/>
</dbReference>
<dbReference type="Pfam" id="PF02151">
    <property type="entry name" value="UVR"/>
    <property type="match status" value="1"/>
</dbReference>
<dbReference type="Pfam" id="PF22920">
    <property type="entry name" value="UvrC_RNaseH"/>
    <property type="match status" value="1"/>
</dbReference>
<dbReference type="Pfam" id="PF08459">
    <property type="entry name" value="UvrC_RNaseH_dom"/>
    <property type="match status" value="1"/>
</dbReference>
<dbReference type="SMART" id="SM00465">
    <property type="entry name" value="GIYc"/>
    <property type="match status" value="1"/>
</dbReference>
<dbReference type="SUPFAM" id="SSF46600">
    <property type="entry name" value="C-terminal UvrC-binding domain of UvrB"/>
    <property type="match status" value="1"/>
</dbReference>
<dbReference type="SUPFAM" id="SSF82771">
    <property type="entry name" value="GIY-YIG endonuclease"/>
    <property type="match status" value="1"/>
</dbReference>
<dbReference type="SUPFAM" id="SSF47781">
    <property type="entry name" value="RuvA domain 2-like"/>
    <property type="match status" value="1"/>
</dbReference>
<dbReference type="PROSITE" id="PS50164">
    <property type="entry name" value="GIY_YIG"/>
    <property type="match status" value="1"/>
</dbReference>
<dbReference type="PROSITE" id="PS50151">
    <property type="entry name" value="UVR"/>
    <property type="match status" value="1"/>
</dbReference>
<dbReference type="PROSITE" id="PS50165">
    <property type="entry name" value="UVRC"/>
    <property type="match status" value="1"/>
</dbReference>
<reference key="1">
    <citation type="journal article" date="2008" name="PLoS ONE">
        <title>Genome sequence of a lancefield group C Streptococcus zooepidemicus strain causing epidemic nephritis: new information about an old disease.</title>
        <authorList>
            <person name="Beres S.B."/>
            <person name="Sesso R."/>
            <person name="Pinto S.W.L."/>
            <person name="Hoe N.P."/>
            <person name="Porcella S.F."/>
            <person name="Deleo F.R."/>
            <person name="Musser J.M."/>
        </authorList>
    </citation>
    <scope>NUCLEOTIDE SEQUENCE [LARGE SCALE GENOMIC DNA]</scope>
    <source>
        <strain>MGCS10565</strain>
    </source>
</reference>
<feature type="chain" id="PRO_1000099520" description="UvrABC system protein C">
    <location>
        <begin position="1"/>
        <end position="594"/>
    </location>
</feature>
<feature type="domain" description="GIY-YIG" evidence="1">
    <location>
        <begin position="14"/>
        <end position="91"/>
    </location>
</feature>
<feature type="domain" description="UVR" evidence="1">
    <location>
        <begin position="196"/>
        <end position="231"/>
    </location>
</feature>